<organism>
    <name type="scientific">Yersinia pseudotuberculosis serotype O:3 (strain YPIII)</name>
    <dbReference type="NCBI Taxonomy" id="502800"/>
    <lineage>
        <taxon>Bacteria</taxon>
        <taxon>Pseudomonadati</taxon>
        <taxon>Pseudomonadota</taxon>
        <taxon>Gammaproteobacteria</taxon>
        <taxon>Enterobacterales</taxon>
        <taxon>Yersiniaceae</taxon>
        <taxon>Yersinia</taxon>
    </lineage>
</organism>
<accession>B1JHN4</accession>
<protein>
    <recommendedName>
        <fullName evidence="1">Nucleoid-associated protein YPK_3197</fullName>
    </recommendedName>
</protein>
<reference key="1">
    <citation type="submission" date="2008-02" db="EMBL/GenBank/DDBJ databases">
        <title>Complete sequence of Yersinia pseudotuberculosis YPIII.</title>
        <authorList>
            <consortium name="US DOE Joint Genome Institute"/>
            <person name="Copeland A."/>
            <person name="Lucas S."/>
            <person name="Lapidus A."/>
            <person name="Glavina del Rio T."/>
            <person name="Dalin E."/>
            <person name="Tice H."/>
            <person name="Bruce D."/>
            <person name="Goodwin L."/>
            <person name="Pitluck S."/>
            <person name="Munk A.C."/>
            <person name="Brettin T."/>
            <person name="Detter J.C."/>
            <person name="Han C."/>
            <person name="Tapia R."/>
            <person name="Schmutz J."/>
            <person name="Larimer F."/>
            <person name="Land M."/>
            <person name="Hauser L."/>
            <person name="Challacombe J.F."/>
            <person name="Green L."/>
            <person name="Lindler L.E."/>
            <person name="Nikolich M.P."/>
            <person name="Richardson P."/>
        </authorList>
    </citation>
    <scope>NUCLEOTIDE SEQUENCE [LARGE SCALE GENOMIC DNA]</scope>
    <source>
        <strain>YPIII</strain>
    </source>
</reference>
<keyword id="KW-0963">Cytoplasm</keyword>
<keyword id="KW-0238">DNA-binding</keyword>
<comment type="function">
    <text evidence="1">Binds to DNA and alters its conformation. May be involved in regulation of gene expression, nucleoid organization and DNA protection.</text>
</comment>
<comment type="subunit">
    <text evidence="1">Homodimer.</text>
</comment>
<comment type="subcellular location">
    <subcellularLocation>
        <location evidence="1">Cytoplasm</location>
        <location evidence="1">Nucleoid</location>
    </subcellularLocation>
</comment>
<comment type="similarity">
    <text evidence="1">Belongs to the YbaB/EbfC family.</text>
</comment>
<sequence length="110" mass="12093">MFGKGGIGNLMKQAQQMQEKMQQMQEEVAKLEVTGESGAGLVKVTINGAHNCRRVEIDPSLLVEDDKEMLEDLIAAALNDAARRIDETQKEKMASVSNGMQLPPGFKMPF</sequence>
<evidence type="ECO:0000255" key="1">
    <source>
        <dbReference type="HAMAP-Rule" id="MF_00274"/>
    </source>
</evidence>
<evidence type="ECO:0000256" key="2">
    <source>
        <dbReference type="SAM" id="MobiDB-lite"/>
    </source>
</evidence>
<feature type="chain" id="PRO_1000114668" description="Nucleoid-associated protein YPK_3197">
    <location>
        <begin position="1"/>
        <end position="110"/>
    </location>
</feature>
<feature type="region of interest" description="Disordered" evidence="2">
    <location>
        <begin position="90"/>
        <end position="110"/>
    </location>
</feature>
<proteinExistence type="inferred from homology"/>
<dbReference type="EMBL" id="CP000950">
    <property type="protein sequence ID" value="ACA69466.1"/>
    <property type="molecule type" value="Genomic_DNA"/>
</dbReference>
<dbReference type="RefSeq" id="WP_002208604.1">
    <property type="nucleotide sequence ID" value="NZ_CP009792.1"/>
</dbReference>
<dbReference type="SMR" id="B1JHN4"/>
<dbReference type="KEGG" id="ypy:YPK_3197"/>
<dbReference type="PATRIC" id="fig|502800.11.peg.3925"/>
<dbReference type="GO" id="GO:0043590">
    <property type="term" value="C:bacterial nucleoid"/>
    <property type="evidence" value="ECO:0007669"/>
    <property type="project" value="UniProtKB-UniRule"/>
</dbReference>
<dbReference type="GO" id="GO:0005829">
    <property type="term" value="C:cytosol"/>
    <property type="evidence" value="ECO:0007669"/>
    <property type="project" value="TreeGrafter"/>
</dbReference>
<dbReference type="GO" id="GO:0003677">
    <property type="term" value="F:DNA binding"/>
    <property type="evidence" value="ECO:0007669"/>
    <property type="project" value="UniProtKB-UniRule"/>
</dbReference>
<dbReference type="FunFam" id="3.30.1310.10:FF:000001">
    <property type="entry name" value="Nucleoid-associated protein YbaB"/>
    <property type="match status" value="1"/>
</dbReference>
<dbReference type="Gene3D" id="3.30.1310.10">
    <property type="entry name" value="Nucleoid-associated protein YbaB-like domain"/>
    <property type="match status" value="1"/>
</dbReference>
<dbReference type="HAMAP" id="MF_00274">
    <property type="entry name" value="DNA_YbaB_EbfC"/>
    <property type="match status" value="1"/>
</dbReference>
<dbReference type="InterPro" id="IPR036894">
    <property type="entry name" value="YbaB-like_sf"/>
</dbReference>
<dbReference type="InterPro" id="IPR004401">
    <property type="entry name" value="YbaB/EbfC"/>
</dbReference>
<dbReference type="NCBIfam" id="TIGR00103">
    <property type="entry name" value="DNA_YbaB_EbfC"/>
    <property type="match status" value="1"/>
</dbReference>
<dbReference type="PANTHER" id="PTHR33449">
    <property type="entry name" value="NUCLEOID-ASSOCIATED PROTEIN YBAB"/>
    <property type="match status" value="1"/>
</dbReference>
<dbReference type="PANTHER" id="PTHR33449:SF1">
    <property type="entry name" value="NUCLEOID-ASSOCIATED PROTEIN YBAB"/>
    <property type="match status" value="1"/>
</dbReference>
<dbReference type="Pfam" id="PF02575">
    <property type="entry name" value="YbaB_DNA_bd"/>
    <property type="match status" value="1"/>
</dbReference>
<dbReference type="PIRSF" id="PIRSF004555">
    <property type="entry name" value="UCP004555"/>
    <property type="match status" value="1"/>
</dbReference>
<dbReference type="SUPFAM" id="SSF82607">
    <property type="entry name" value="YbaB-like"/>
    <property type="match status" value="1"/>
</dbReference>
<gene>
    <name type="ordered locus">YPK_3197</name>
</gene>
<name>Y3197_YERPY</name>